<gene>
    <name evidence="1" type="primary">betA</name>
    <name type="ordered locus">Bxeno_B1404</name>
    <name type="ORF">Bxe_B1592</name>
</gene>
<keyword id="KW-0274">FAD</keyword>
<keyword id="KW-0285">Flavoprotein</keyword>
<keyword id="KW-0520">NAD</keyword>
<keyword id="KW-0560">Oxidoreductase</keyword>
<keyword id="KW-1185">Reference proteome</keyword>
<name>BETA_PARXL</name>
<sequence>MAANEYDYIIVGAGSAGNVLASRLAEDADVTVLLLEAGGPDYRFDFRTQMPAALAYPLQGRRYNWAYETDPEPHMNNRRMECGRGKGLGGSSLINGMCYIRGNALDYDGWAAHAGLENWTYLDCLPYFRKAETRDIGANAYHGGDGPVHVTTSKPGNNPLFAAMVEAGVQAGFPRTDDLNGYQQEGFGPMDRTVTANGRRASTARGYLDRAKARPNLTIVTHAVTDRVLFSGKRAVGVSYLHHGNVLNAQARREVLVCSGAIASPQLLQRSGVGRSTWLRELDVPLVHDLPGVGENLQDHLEMYIQYECKEPVSLYPALQWWNQPAIGLEWMLNGTGIGASNQFEAGGFIRTRDDDPWPNIQYHFLPVAINYNGSNAIRMHGFQAHVGSMRSPSRGRVKLTSRDPNAHPGILFNYMADPLDWREFRDGIRITREIMRQPALDRYRGRELNPGAELTTDEQLDSFVRMRAETAFHPSCSCKMGYDDMAVVDNEGRVHGMQGLRVVDASIMPRITTGNLNAPTIMLAEKIADRIRGREALARVDTPYFVANGVASRKRESATV</sequence>
<protein>
    <recommendedName>
        <fullName evidence="1">Oxygen-dependent choline dehydrogenase</fullName>
        <shortName evidence="1">CDH</shortName>
        <shortName evidence="1">CHD</shortName>
        <ecNumber evidence="1">1.1.99.1</ecNumber>
    </recommendedName>
    <alternativeName>
        <fullName evidence="1">Betaine aldehyde dehydrogenase</fullName>
        <shortName evidence="1">BADH</shortName>
        <ecNumber evidence="1">1.2.1.8</ecNumber>
    </alternativeName>
</protein>
<feature type="chain" id="PRO_0000258923" description="Oxygen-dependent choline dehydrogenase">
    <location>
        <begin position="1"/>
        <end position="561"/>
    </location>
</feature>
<feature type="active site" description="Proton acceptor" evidence="1">
    <location>
        <position position="474"/>
    </location>
</feature>
<feature type="binding site" evidence="1">
    <location>
        <begin position="7"/>
        <end position="36"/>
    </location>
    <ligand>
        <name>FAD</name>
        <dbReference type="ChEBI" id="CHEBI:57692"/>
    </ligand>
</feature>
<dbReference type="EC" id="1.1.99.1" evidence="1"/>
<dbReference type="EC" id="1.2.1.8" evidence="1"/>
<dbReference type="EMBL" id="CP000271">
    <property type="protein sequence ID" value="ABE34372.1"/>
    <property type="molecule type" value="Genomic_DNA"/>
</dbReference>
<dbReference type="RefSeq" id="WP_011491700.1">
    <property type="nucleotide sequence ID" value="NC_007952.1"/>
</dbReference>
<dbReference type="SMR" id="Q13NG7"/>
<dbReference type="STRING" id="266265.Bxe_B1592"/>
<dbReference type="KEGG" id="bxb:DR64_6895"/>
<dbReference type="KEGG" id="bxe:Bxe_B1592"/>
<dbReference type="PATRIC" id="fig|266265.5.peg.6153"/>
<dbReference type="eggNOG" id="COG2303">
    <property type="taxonomic scope" value="Bacteria"/>
</dbReference>
<dbReference type="OrthoDB" id="9785276at2"/>
<dbReference type="UniPathway" id="UPA00529">
    <property type="reaction ID" value="UER00385"/>
</dbReference>
<dbReference type="Proteomes" id="UP000001817">
    <property type="component" value="Chromosome 2"/>
</dbReference>
<dbReference type="GO" id="GO:0016020">
    <property type="term" value="C:membrane"/>
    <property type="evidence" value="ECO:0007669"/>
    <property type="project" value="TreeGrafter"/>
</dbReference>
<dbReference type="GO" id="GO:0008802">
    <property type="term" value="F:betaine-aldehyde dehydrogenase (NAD+) activity"/>
    <property type="evidence" value="ECO:0007669"/>
    <property type="project" value="UniProtKB-EC"/>
</dbReference>
<dbReference type="GO" id="GO:0008812">
    <property type="term" value="F:choline dehydrogenase activity"/>
    <property type="evidence" value="ECO:0007669"/>
    <property type="project" value="UniProtKB-UniRule"/>
</dbReference>
<dbReference type="GO" id="GO:0050660">
    <property type="term" value="F:flavin adenine dinucleotide binding"/>
    <property type="evidence" value="ECO:0007669"/>
    <property type="project" value="InterPro"/>
</dbReference>
<dbReference type="GO" id="GO:0019285">
    <property type="term" value="P:glycine betaine biosynthetic process from choline"/>
    <property type="evidence" value="ECO:0007669"/>
    <property type="project" value="UniProtKB-UniRule"/>
</dbReference>
<dbReference type="Gene3D" id="3.50.50.60">
    <property type="entry name" value="FAD/NAD(P)-binding domain"/>
    <property type="match status" value="1"/>
</dbReference>
<dbReference type="Gene3D" id="3.30.560.10">
    <property type="entry name" value="Glucose Oxidase, domain 3"/>
    <property type="match status" value="1"/>
</dbReference>
<dbReference type="HAMAP" id="MF_00750">
    <property type="entry name" value="Choline_dehydrogen"/>
    <property type="match status" value="1"/>
</dbReference>
<dbReference type="InterPro" id="IPR011533">
    <property type="entry name" value="BetA"/>
</dbReference>
<dbReference type="InterPro" id="IPR036188">
    <property type="entry name" value="FAD/NAD-bd_sf"/>
</dbReference>
<dbReference type="InterPro" id="IPR012132">
    <property type="entry name" value="GMC_OxRdtase"/>
</dbReference>
<dbReference type="InterPro" id="IPR000172">
    <property type="entry name" value="GMC_OxRdtase_N"/>
</dbReference>
<dbReference type="InterPro" id="IPR007867">
    <property type="entry name" value="GMC_OxRtase_C"/>
</dbReference>
<dbReference type="NCBIfam" id="TIGR01810">
    <property type="entry name" value="betA"/>
    <property type="match status" value="1"/>
</dbReference>
<dbReference type="NCBIfam" id="NF002550">
    <property type="entry name" value="PRK02106.1"/>
    <property type="match status" value="1"/>
</dbReference>
<dbReference type="PANTHER" id="PTHR11552:SF147">
    <property type="entry name" value="CHOLINE DEHYDROGENASE, MITOCHONDRIAL"/>
    <property type="match status" value="1"/>
</dbReference>
<dbReference type="PANTHER" id="PTHR11552">
    <property type="entry name" value="GLUCOSE-METHANOL-CHOLINE GMC OXIDOREDUCTASE"/>
    <property type="match status" value="1"/>
</dbReference>
<dbReference type="Pfam" id="PF05199">
    <property type="entry name" value="GMC_oxred_C"/>
    <property type="match status" value="1"/>
</dbReference>
<dbReference type="Pfam" id="PF00732">
    <property type="entry name" value="GMC_oxred_N"/>
    <property type="match status" value="1"/>
</dbReference>
<dbReference type="PIRSF" id="PIRSF000137">
    <property type="entry name" value="Alcohol_oxidase"/>
    <property type="match status" value="1"/>
</dbReference>
<dbReference type="SUPFAM" id="SSF54373">
    <property type="entry name" value="FAD-linked reductases, C-terminal domain"/>
    <property type="match status" value="1"/>
</dbReference>
<dbReference type="SUPFAM" id="SSF51905">
    <property type="entry name" value="FAD/NAD(P)-binding domain"/>
    <property type="match status" value="1"/>
</dbReference>
<dbReference type="PROSITE" id="PS00623">
    <property type="entry name" value="GMC_OXRED_1"/>
    <property type="match status" value="1"/>
</dbReference>
<dbReference type="PROSITE" id="PS00624">
    <property type="entry name" value="GMC_OXRED_2"/>
    <property type="match status" value="1"/>
</dbReference>
<accession>Q13NG7</accession>
<reference key="1">
    <citation type="journal article" date="2006" name="Proc. Natl. Acad. Sci. U.S.A.">
        <title>Burkholderia xenovorans LB400 harbors a multi-replicon, 9.73-Mbp genome shaped for versatility.</title>
        <authorList>
            <person name="Chain P.S.G."/>
            <person name="Denef V.J."/>
            <person name="Konstantinidis K.T."/>
            <person name="Vergez L.M."/>
            <person name="Agullo L."/>
            <person name="Reyes V.L."/>
            <person name="Hauser L."/>
            <person name="Cordova M."/>
            <person name="Gomez L."/>
            <person name="Gonzalez M."/>
            <person name="Land M."/>
            <person name="Lao V."/>
            <person name="Larimer F."/>
            <person name="LiPuma J.J."/>
            <person name="Mahenthiralingam E."/>
            <person name="Malfatti S.A."/>
            <person name="Marx C.J."/>
            <person name="Parnell J.J."/>
            <person name="Ramette A."/>
            <person name="Richardson P."/>
            <person name="Seeger M."/>
            <person name="Smith D."/>
            <person name="Spilker T."/>
            <person name="Sul W.J."/>
            <person name="Tsoi T.V."/>
            <person name="Ulrich L.E."/>
            <person name="Zhulin I.B."/>
            <person name="Tiedje J.M."/>
        </authorList>
    </citation>
    <scope>NUCLEOTIDE SEQUENCE [LARGE SCALE GENOMIC DNA]</scope>
    <source>
        <strain>LB400</strain>
    </source>
</reference>
<evidence type="ECO:0000255" key="1">
    <source>
        <dbReference type="HAMAP-Rule" id="MF_00750"/>
    </source>
</evidence>
<proteinExistence type="inferred from homology"/>
<comment type="function">
    <text evidence="1">Involved in the biosynthesis of the osmoprotectant glycine betaine. Catalyzes the oxidation of choline to betaine aldehyde and betaine aldehyde to glycine betaine at the same rate.</text>
</comment>
<comment type="catalytic activity">
    <reaction evidence="1">
        <text>choline + A = betaine aldehyde + AH2</text>
        <dbReference type="Rhea" id="RHEA:17433"/>
        <dbReference type="ChEBI" id="CHEBI:13193"/>
        <dbReference type="ChEBI" id="CHEBI:15354"/>
        <dbReference type="ChEBI" id="CHEBI:15710"/>
        <dbReference type="ChEBI" id="CHEBI:17499"/>
        <dbReference type="EC" id="1.1.99.1"/>
    </reaction>
</comment>
<comment type="catalytic activity">
    <reaction evidence="1">
        <text>betaine aldehyde + NAD(+) + H2O = glycine betaine + NADH + 2 H(+)</text>
        <dbReference type="Rhea" id="RHEA:15305"/>
        <dbReference type="ChEBI" id="CHEBI:15377"/>
        <dbReference type="ChEBI" id="CHEBI:15378"/>
        <dbReference type="ChEBI" id="CHEBI:15710"/>
        <dbReference type="ChEBI" id="CHEBI:17750"/>
        <dbReference type="ChEBI" id="CHEBI:57540"/>
        <dbReference type="ChEBI" id="CHEBI:57945"/>
        <dbReference type="EC" id="1.2.1.8"/>
    </reaction>
</comment>
<comment type="cofactor">
    <cofactor evidence="1">
        <name>FAD</name>
        <dbReference type="ChEBI" id="CHEBI:57692"/>
    </cofactor>
</comment>
<comment type="pathway">
    <text evidence="1">Amine and polyamine biosynthesis; betaine biosynthesis via choline pathway; betaine aldehyde from choline (cytochrome c reductase route): step 1/1.</text>
</comment>
<comment type="similarity">
    <text evidence="1">Belongs to the GMC oxidoreductase family.</text>
</comment>
<organism>
    <name type="scientific">Paraburkholderia xenovorans (strain LB400)</name>
    <dbReference type="NCBI Taxonomy" id="266265"/>
    <lineage>
        <taxon>Bacteria</taxon>
        <taxon>Pseudomonadati</taxon>
        <taxon>Pseudomonadota</taxon>
        <taxon>Betaproteobacteria</taxon>
        <taxon>Burkholderiales</taxon>
        <taxon>Burkholderiaceae</taxon>
        <taxon>Paraburkholderia</taxon>
    </lineage>
</organism>